<feature type="chain" id="PRO_0000219125" description="Protein ATP1B4">
    <location>
        <begin position="1"/>
        <end position="356"/>
    </location>
</feature>
<feature type="topological domain" description="Nuclear" evidence="2">
    <location>
        <begin position="1"/>
        <end position="109"/>
    </location>
</feature>
<feature type="transmembrane region" description="Helical; Signal-anchor for type II membrane protein" evidence="2">
    <location>
        <begin position="110"/>
        <end position="130"/>
    </location>
</feature>
<feature type="topological domain" description="Perinuclear space" evidence="2">
    <location>
        <begin position="131"/>
        <end position="356"/>
    </location>
</feature>
<feature type="region of interest" description="Disordered" evidence="3">
    <location>
        <begin position="32"/>
        <end position="77"/>
    </location>
</feature>
<feature type="compositionally biased region" description="Acidic residues" evidence="3">
    <location>
        <begin position="33"/>
        <end position="43"/>
    </location>
</feature>
<feature type="compositionally biased region" description="Acidic residues" evidence="3">
    <location>
        <begin position="51"/>
        <end position="72"/>
    </location>
</feature>
<feature type="splice variant" id="VSP_000354" description="In isoform B." evidence="6">
    <location>
        <begin position="106"/>
        <end position="109"/>
    </location>
</feature>
<dbReference type="EMBL" id="AF158385">
    <property type="protein sequence ID" value="AAD49694.1"/>
    <property type="molecule type" value="mRNA"/>
</dbReference>
<dbReference type="EMBL" id="AF158386">
    <property type="protein sequence ID" value="AAD49695.1"/>
    <property type="molecule type" value="mRNA"/>
</dbReference>
<dbReference type="RefSeq" id="NP_445833.1">
    <property type="nucleotide sequence ID" value="NM_053381.1"/>
</dbReference>
<dbReference type="SMR" id="Q9R193"/>
<dbReference type="DIP" id="DIP-60962N"/>
<dbReference type="FunCoup" id="Q9R193">
    <property type="interactions" value="304"/>
</dbReference>
<dbReference type="IntAct" id="Q9R193">
    <property type="interactions" value="2"/>
</dbReference>
<dbReference type="STRING" id="10116.ENSRNOP00000009329"/>
<dbReference type="PhosphoSitePlus" id="Q9R193"/>
<dbReference type="PaxDb" id="10116-ENSRNOP00000009329"/>
<dbReference type="GeneID" id="84396"/>
<dbReference type="KEGG" id="rno:84396"/>
<dbReference type="UCSC" id="RGD:620994">
    <molecule id="Q9R193-1"/>
    <property type="organism name" value="rat"/>
</dbReference>
<dbReference type="AGR" id="RGD:620994"/>
<dbReference type="CTD" id="23439"/>
<dbReference type="RGD" id="620994">
    <property type="gene designation" value="Atp1b4"/>
</dbReference>
<dbReference type="eggNOG" id="KOG3927">
    <property type="taxonomic scope" value="Eukaryota"/>
</dbReference>
<dbReference type="InParanoid" id="Q9R193"/>
<dbReference type="OrthoDB" id="5912413at2759"/>
<dbReference type="PhylomeDB" id="Q9R193"/>
<dbReference type="Reactome" id="R-RNO-2173795">
    <property type="pathway name" value="Downregulation of SMAD2/3:SMAD4 transcriptional activity"/>
</dbReference>
<dbReference type="PRO" id="PR:Q9R193"/>
<dbReference type="Proteomes" id="UP000002494">
    <property type="component" value="Unplaced"/>
</dbReference>
<dbReference type="GO" id="GO:0000785">
    <property type="term" value="C:chromatin"/>
    <property type="evidence" value="ECO:0000314"/>
    <property type="project" value="RGD"/>
</dbReference>
<dbReference type="GO" id="GO:0005635">
    <property type="term" value="C:nuclear envelope"/>
    <property type="evidence" value="ECO:0000266"/>
    <property type="project" value="RGD"/>
</dbReference>
<dbReference type="GO" id="GO:0005637">
    <property type="term" value="C:nuclear inner membrane"/>
    <property type="evidence" value="ECO:0000250"/>
    <property type="project" value="UniProtKB"/>
</dbReference>
<dbReference type="GO" id="GO:0005634">
    <property type="term" value="C:nucleus"/>
    <property type="evidence" value="ECO:0000266"/>
    <property type="project" value="RGD"/>
</dbReference>
<dbReference type="GO" id="GO:0005890">
    <property type="term" value="C:sodium:potassium-exchanging ATPase complex"/>
    <property type="evidence" value="ECO:0007669"/>
    <property type="project" value="InterPro"/>
</dbReference>
<dbReference type="GO" id="GO:0006813">
    <property type="term" value="P:potassium ion transport"/>
    <property type="evidence" value="ECO:0007669"/>
    <property type="project" value="InterPro"/>
</dbReference>
<dbReference type="GO" id="GO:0006355">
    <property type="term" value="P:regulation of DNA-templated transcription"/>
    <property type="evidence" value="ECO:0000250"/>
    <property type="project" value="UniProtKB"/>
</dbReference>
<dbReference type="GO" id="GO:0006814">
    <property type="term" value="P:sodium ion transport"/>
    <property type="evidence" value="ECO:0007669"/>
    <property type="project" value="InterPro"/>
</dbReference>
<dbReference type="FunFam" id="2.60.40.1660:FF:000001">
    <property type="entry name" value="Sodium/potassium-transporting ATPase subunit beta"/>
    <property type="match status" value="1"/>
</dbReference>
<dbReference type="Gene3D" id="2.60.40.1660">
    <property type="entry name" value="Na, k-atpase alpha subunit"/>
    <property type="match status" value="1"/>
</dbReference>
<dbReference type="InterPro" id="IPR000402">
    <property type="entry name" value="Na/K_ATPase_sub_beta"/>
</dbReference>
<dbReference type="InterPro" id="IPR038702">
    <property type="entry name" value="Na/K_ATPase_sub_beta_sf"/>
</dbReference>
<dbReference type="NCBIfam" id="TIGR01107">
    <property type="entry name" value="Na_K_ATPase_bet"/>
    <property type="match status" value="1"/>
</dbReference>
<dbReference type="PANTHER" id="PTHR11523:SF12">
    <property type="entry name" value="PROTEIN ATP1B4"/>
    <property type="match status" value="1"/>
</dbReference>
<dbReference type="PANTHER" id="PTHR11523">
    <property type="entry name" value="SODIUM/POTASSIUM-DEPENDENT ATPASE BETA SUBUNIT"/>
    <property type="match status" value="1"/>
</dbReference>
<dbReference type="Pfam" id="PF00287">
    <property type="entry name" value="Na_K-ATPase"/>
    <property type="match status" value="1"/>
</dbReference>
<dbReference type="PROSITE" id="PS00390">
    <property type="entry name" value="ATPASE_NA_K_BETA_1"/>
    <property type="match status" value="1"/>
</dbReference>
<dbReference type="PROSITE" id="PS00391">
    <property type="entry name" value="ATPASE_NA_K_BETA_2"/>
    <property type="match status" value="1"/>
</dbReference>
<evidence type="ECO:0000250" key="1"/>
<evidence type="ECO:0000255" key="2"/>
<evidence type="ECO:0000256" key="3">
    <source>
        <dbReference type="SAM" id="MobiDB-lite"/>
    </source>
</evidence>
<evidence type="ECO:0000269" key="4">
    <source>
    </source>
</evidence>
<evidence type="ECO:0000269" key="5">
    <source>
    </source>
</evidence>
<evidence type="ECO:0000303" key="6">
    <source>
    </source>
</evidence>
<evidence type="ECO:0000305" key="7"/>
<organism>
    <name type="scientific">Rattus norvegicus</name>
    <name type="common">Rat</name>
    <dbReference type="NCBI Taxonomy" id="10116"/>
    <lineage>
        <taxon>Eukaryota</taxon>
        <taxon>Metazoa</taxon>
        <taxon>Chordata</taxon>
        <taxon>Craniata</taxon>
        <taxon>Vertebrata</taxon>
        <taxon>Euteleostomi</taxon>
        <taxon>Mammalia</taxon>
        <taxon>Eutheria</taxon>
        <taxon>Euarchontoglires</taxon>
        <taxon>Glires</taxon>
        <taxon>Rodentia</taxon>
        <taxon>Myomorpha</taxon>
        <taxon>Muroidea</taxon>
        <taxon>Muridae</taxon>
        <taxon>Murinae</taxon>
        <taxon>Rattus</taxon>
    </lineage>
</organism>
<keyword id="KW-0025">Alternative splicing</keyword>
<keyword id="KW-0472">Membrane</keyword>
<keyword id="KW-0539">Nucleus</keyword>
<keyword id="KW-1185">Reference proteome</keyword>
<keyword id="KW-0735">Signal-anchor</keyword>
<keyword id="KW-0804">Transcription</keyword>
<keyword id="KW-0805">Transcription regulation</keyword>
<keyword id="KW-0812">Transmembrane</keyword>
<keyword id="KW-1133">Transmembrane helix</keyword>
<proteinExistence type="evidence at protein level"/>
<sequence>MRRQLRSRRAPAFPYGYRYRLDDQDEMNHNYLADEEEEAEEEAQVMMVPGLEEEEEEEEGKEEEEEREEEEGQGQSTGNAWWRKLQIVNEYLWDPEKRMSLARTGQSRSLILVIYFFFYASLAAVITLFIYMLFLAISPYMPTFTEQVKPPGVMIRPFAHSLNFNFNVSEPETWQRYVISLNGFLQGYNDSLQEEMNIDCPPGQYFIQDGDEDEDKKACQFKRSFLKNCSGLEDPTFGYSTGQPCILLKMNRIVGFRPEFGDPVKVSCKVQKGDENDIRSINYYPESASFDLRYYPYYGKLTHVNYTSPLVAMHFTDVVKNQEVPVQCQLKGKGIVNDVINDRFVGRIIFTLNIET</sequence>
<name>AT1B4_RAT</name>
<comment type="function">
    <text evidence="1">May act as a transcriptional coregulator during muscle development through its interaction with SNW1. Has lost its ancestral function as a Na,K-ATPase beta-subunit (By similarity).</text>
</comment>
<comment type="subunit">
    <text evidence="1 5">Does not associate with known Na,K-ATPase alpha-subunits (By similarity). Associates with a SMAD7-transcriptional complex. Interacts with SNW1 and TOR1AIP1.</text>
</comment>
<comment type="interaction">
    <interactant intactId="EBI-15644324">
        <id>Q9R193</id>
    </interactant>
    <interactant intactId="EBI-15644341">
        <id>D4A8G7</id>
        <label>Snw1</label>
    </interactant>
    <organismsDiffer>false</organismsDiffer>
    <experiments>2</experiments>
</comment>
<comment type="subcellular location">
    <subcellularLocation>
        <location evidence="1">Nucleus inner membrane</location>
        <topology evidence="1">Single-pass type II membrane protein</topology>
    </subcellularLocation>
    <text evidence="1">Detected in nuclear envelops.</text>
</comment>
<comment type="alternative products">
    <event type="alternative splicing"/>
    <isoform>
        <id>Q9R193-1</id>
        <name>A</name>
        <sequence type="displayed"/>
    </isoform>
    <isoform>
        <id>Q9R193-2</id>
        <name>B</name>
        <sequence type="described" ref="VSP_000354"/>
    </isoform>
</comment>
<comment type="tissue specificity">
    <text evidence="4">Expressed in perinatal myocytes (at protein level). Expressed during postnatal development in skeletal muscle and heart.</text>
</comment>
<comment type="similarity">
    <text evidence="7">Belongs to the X(+)/potassium ATPases subunit beta family.</text>
</comment>
<gene>
    <name type="primary">Atp1b4</name>
</gene>
<accession>Q9R193</accession>
<accession>Q9R192</accession>
<protein>
    <recommendedName>
        <fullName>Protein ATP1B4</fullName>
    </recommendedName>
    <alternativeName>
        <fullName>X,K-ATPase subunit beta-m</fullName>
    </alternativeName>
    <alternativeName>
        <fullName>X/potassium-transporting ATPase subunit beta-m</fullName>
    </alternativeName>
</protein>
<reference key="1">
    <citation type="journal article" date="1999" name="FEBS Lett.">
        <title>Identification of a novel gene of the X,K-ATPase beta-subunit family that is predominantly expressed in skeletal and heart muscles.</title>
        <authorList>
            <person name="Pestov N.B."/>
            <person name="Adams G."/>
            <person name="Shakhparonov M.I."/>
            <person name="Modyanov N.N."/>
        </authorList>
    </citation>
    <scope>NUCLEOTIDE SEQUENCE [MRNA] (ISOFORMS A AND B)</scope>
    <source>
        <strain>Sprague-Dawley</strain>
        <tissue>Skeletal muscle</tissue>
    </source>
</reference>
<reference key="2">
    <citation type="journal article" date="2004" name="Am. J. Physiol.">
        <title>Accumulation of beta (m), a structural member of X,K-ATPase beta-subunit family, in nuclear envelopes of perinatal myocytes.</title>
        <authorList>
            <person name="Zhao H."/>
            <person name="Pestov N.B."/>
            <person name="Korneenko T.V."/>
            <person name="Shakhparonov M.I."/>
            <person name="Modyanov N.N."/>
        </authorList>
    </citation>
    <scope>TISSUE SPECIFICITY</scope>
</reference>
<reference key="3">
    <citation type="journal article" date="2007" name="Proc. Natl. Acad. Sci. U.S.A.">
        <title>Evolution of Na,K-ATPase betam-subunit into a coregulator of transcription in placental mammals.</title>
        <authorList>
            <person name="Pestov N.B."/>
            <person name="Ahmad N."/>
            <person name="Korneenko T.V."/>
            <person name="Zhao H."/>
            <person name="Radkov R."/>
            <person name="Schaer D."/>
            <person name="Roy S."/>
            <person name="Bibert S."/>
            <person name="Geering K."/>
            <person name="Modyanov N.N."/>
        </authorList>
    </citation>
    <scope>INTERACTION WITH SNW1 AND TOR1AIP1</scope>
</reference>